<sequence>MAVNLYDYANQLEQALRESEEYKAIKEAFANVKANEESKKLFDEFRETQINFQQKQMQGEEIAEEDLQKAQEQAQAIEKDENISALMNAEQKMSQVFQEINQIIVKPLDEIYAD</sequence>
<evidence type="ECO:0000255" key="1">
    <source>
        <dbReference type="HAMAP-Rule" id="MF_01526"/>
    </source>
</evidence>
<feature type="chain" id="PRO_0000109984" description="UPF0342 protein SAV1845">
    <location>
        <begin position="1"/>
        <end position="114"/>
    </location>
</feature>
<comment type="similarity">
    <text evidence="1">Belongs to the UPF0342 family.</text>
</comment>
<proteinExistence type="inferred from homology"/>
<dbReference type="EMBL" id="BA000017">
    <property type="protein sequence ID" value="BAB58007.1"/>
    <property type="molecule type" value="Genomic_DNA"/>
</dbReference>
<dbReference type="RefSeq" id="WP_000290301.1">
    <property type="nucleotide sequence ID" value="NC_002758.2"/>
</dbReference>
<dbReference type="SMR" id="Q99T33"/>
<dbReference type="KEGG" id="sav:SAV1845"/>
<dbReference type="HOGENOM" id="CLU_140243_3_0_9"/>
<dbReference type="PhylomeDB" id="Q99T33"/>
<dbReference type="Proteomes" id="UP000002481">
    <property type="component" value="Chromosome"/>
</dbReference>
<dbReference type="Gene3D" id="1.20.1500.10">
    <property type="entry name" value="YheA/YmcA-like"/>
    <property type="match status" value="1"/>
</dbReference>
<dbReference type="HAMAP" id="MF_01526">
    <property type="entry name" value="UPF0342"/>
    <property type="match status" value="1"/>
</dbReference>
<dbReference type="InterPro" id="IPR010368">
    <property type="entry name" value="Com_YlbF"/>
</dbReference>
<dbReference type="InterPro" id="IPR023378">
    <property type="entry name" value="YheA/YmcA-like_dom_sf"/>
</dbReference>
<dbReference type="NCBIfam" id="NF010212">
    <property type="entry name" value="PRK13676.1-5"/>
    <property type="match status" value="1"/>
</dbReference>
<dbReference type="Pfam" id="PF06133">
    <property type="entry name" value="Com_YlbF"/>
    <property type="match status" value="1"/>
</dbReference>
<dbReference type="SUPFAM" id="SSF158622">
    <property type="entry name" value="YheA/YmcA-like"/>
    <property type="match status" value="1"/>
</dbReference>
<gene>
    <name type="ordered locus">SAV1845</name>
</gene>
<reference key="1">
    <citation type="journal article" date="2001" name="Lancet">
        <title>Whole genome sequencing of meticillin-resistant Staphylococcus aureus.</title>
        <authorList>
            <person name="Kuroda M."/>
            <person name="Ohta T."/>
            <person name="Uchiyama I."/>
            <person name="Baba T."/>
            <person name="Yuzawa H."/>
            <person name="Kobayashi I."/>
            <person name="Cui L."/>
            <person name="Oguchi A."/>
            <person name="Aoki K."/>
            <person name="Nagai Y."/>
            <person name="Lian J.-Q."/>
            <person name="Ito T."/>
            <person name="Kanamori M."/>
            <person name="Matsumaru H."/>
            <person name="Maruyama A."/>
            <person name="Murakami H."/>
            <person name="Hosoyama A."/>
            <person name="Mizutani-Ui Y."/>
            <person name="Takahashi N.K."/>
            <person name="Sawano T."/>
            <person name="Inoue R."/>
            <person name="Kaito C."/>
            <person name="Sekimizu K."/>
            <person name="Hirakawa H."/>
            <person name="Kuhara S."/>
            <person name="Goto S."/>
            <person name="Yabuzaki J."/>
            <person name="Kanehisa M."/>
            <person name="Yamashita A."/>
            <person name="Oshima K."/>
            <person name="Furuya K."/>
            <person name="Yoshino C."/>
            <person name="Shiba T."/>
            <person name="Hattori M."/>
            <person name="Ogasawara N."/>
            <person name="Hayashi H."/>
            <person name="Hiramatsu K."/>
        </authorList>
    </citation>
    <scope>NUCLEOTIDE SEQUENCE [LARGE SCALE GENOMIC DNA]</scope>
    <source>
        <strain>Mu50 / ATCC 700699</strain>
    </source>
</reference>
<accession>Q99T33</accession>
<name>Y1845_STAAM</name>
<organism>
    <name type="scientific">Staphylococcus aureus (strain Mu50 / ATCC 700699)</name>
    <dbReference type="NCBI Taxonomy" id="158878"/>
    <lineage>
        <taxon>Bacteria</taxon>
        <taxon>Bacillati</taxon>
        <taxon>Bacillota</taxon>
        <taxon>Bacilli</taxon>
        <taxon>Bacillales</taxon>
        <taxon>Staphylococcaceae</taxon>
        <taxon>Staphylococcus</taxon>
    </lineage>
</organism>
<protein>
    <recommendedName>
        <fullName evidence="1">UPF0342 protein SAV1845</fullName>
    </recommendedName>
</protein>